<dbReference type="EC" id="4.1.1.39" evidence="1"/>
<dbReference type="EMBL" id="AJ233119">
    <property type="protein sequence ID" value="CAB44247.1"/>
    <property type="molecule type" value="Genomic_DNA"/>
</dbReference>
<dbReference type="SMR" id="Q9XQJ6"/>
<dbReference type="GO" id="GO:0009507">
    <property type="term" value="C:chloroplast"/>
    <property type="evidence" value="ECO:0007669"/>
    <property type="project" value="UniProtKB-SubCell"/>
</dbReference>
<dbReference type="GO" id="GO:0000287">
    <property type="term" value="F:magnesium ion binding"/>
    <property type="evidence" value="ECO:0007669"/>
    <property type="project" value="InterPro"/>
</dbReference>
<dbReference type="GO" id="GO:0004497">
    <property type="term" value="F:monooxygenase activity"/>
    <property type="evidence" value="ECO:0007669"/>
    <property type="project" value="UniProtKB-KW"/>
</dbReference>
<dbReference type="GO" id="GO:0016984">
    <property type="term" value="F:ribulose-bisphosphate carboxylase activity"/>
    <property type="evidence" value="ECO:0007669"/>
    <property type="project" value="UniProtKB-EC"/>
</dbReference>
<dbReference type="GO" id="GO:0009853">
    <property type="term" value="P:photorespiration"/>
    <property type="evidence" value="ECO:0007669"/>
    <property type="project" value="UniProtKB-KW"/>
</dbReference>
<dbReference type="GO" id="GO:0019253">
    <property type="term" value="P:reductive pentose-phosphate cycle"/>
    <property type="evidence" value="ECO:0007669"/>
    <property type="project" value="UniProtKB-KW"/>
</dbReference>
<dbReference type="CDD" id="cd08212">
    <property type="entry name" value="RuBisCO_large_I"/>
    <property type="match status" value="1"/>
</dbReference>
<dbReference type="FunFam" id="3.20.20.110:FF:000001">
    <property type="entry name" value="Ribulose bisphosphate carboxylase large chain"/>
    <property type="match status" value="1"/>
</dbReference>
<dbReference type="FunFam" id="3.30.70.150:FF:000001">
    <property type="entry name" value="Ribulose bisphosphate carboxylase large chain"/>
    <property type="match status" value="1"/>
</dbReference>
<dbReference type="Gene3D" id="3.20.20.110">
    <property type="entry name" value="Ribulose bisphosphate carboxylase, large subunit, C-terminal domain"/>
    <property type="match status" value="1"/>
</dbReference>
<dbReference type="Gene3D" id="3.30.70.150">
    <property type="entry name" value="RuBisCO large subunit, N-terminal domain"/>
    <property type="match status" value="1"/>
</dbReference>
<dbReference type="HAMAP" id="MF_01338">
    <property type="entry name" value="RuBisCO_L_type1"/>
    <property type="match status" value="1"/>
</dbReference>
<dbReference type="InterPro" id="IPR033966">
    <property type="entry name" value="RuBisCO"/>
</dbReference>
<dbReference type="InterPro" id="IPR020878">
    <property type="entry name" value="RuBisCo_large_chain_AS"/>
</dbReference>
<dbReference type="InterPro" id="IPR000685">
    <property type="entry name" value="RuBisCO_lsu_C"/>
</dbReference>
<dbReference type="InterPro" id="IPR036376">
    <property type="entry name" value="RuBisCO_lsu_C_sf"/>
</dbReference>
<dbReference type="InterPro" id="IPR017443">
    <property type="entry name" value="RuBisCO_lsu_fd_N"/>
</dbReference>
<dbReference type="InterPro" id="IPR036422">
    <property type="entry name" value="RuBisCO_lsu_N_sf"/>
</dbReference>
<dbReference type="InterPro" id="IPR020888">
    <property type="entry name" value="RuBisCO_lsuI"/>
</dbReference>
<dbReference type="NCBIfam" id="NF003252">
    <property type="entry name" value="PRK04208.1"/>
    <property type="match status" value="1"/>
</dbReference>
<dbReference type="PANTHER" id="PTHR42704">
    <property type="entry name" value="RIBULOSE BISPHOSPHATE CARBOXYLASE"/>
    <property type="match status" value="1"/>
</dbReference>
<dbReference type="PANTHER" id="PTHR42704:SF15">
    <property type="entry name" value="RIBULOSE BISPHOSPHATE CARBOXYLASE LARGE CHAIN"/>
    <property type="match status" value="1"/>
</dbReference>
<dbReference type="Pfam" id="PF00016">
    <property type="entry name" value="RuBisCO_large"/>
    <property type="match status" value="1"/>
</dbReference>
<dbReference type="Pfam" id="PF02788">
    <property type="entry name" value="RuBisCO_large_N"/>
    <property type="match status" value="1"/>
</dbReference>
<dbReference type="SFLD" id="SFLDG01052">
    <property type="entry name" value="RuBisCO"/>
    <property type="match status" value="1"/>
</dbReference>
<dbReference type="SFLD" id="SFLDS00014">
    <property type="entry name" value="RuBisCO"/>
    <property type="match status" value="1"/>
</dbReference>
<dbReference type="SFLD" id="SFLDG00301">
    <property type="entry name" value="RuBisCO-like_proteins"/>
    <property type="match status" value="1"/>
</dbReference>
<dbReference type="SUPFAM" id="SSF51649">
    <property type="entry name" value="RuBisCo, C-terminal domain"/>
    <property type="match status" value="1"/>
</dbReference>
<dbReference type="SUPFAM" id="SSF54966">
    <property type="entry name" value="RuBisCO, large subunit, small (N-terminal) domain"/>
    <property type="match status" value="1"/>
</dbReference>
<dbReference type="PROSITE" id="PS00157">
    <property type="entry name" value="RUBISCO_LARGE"/>
    <property type="match status" value="1"/>
</dbReference>
<evidence type="ECO:0000255" key="1">
    <source>
        <dbReference type="HAMAP-Rule" id="MF_01338"/>
    </source>
</evidence>
<feature type="chain" id="PRO_0000062554" description="Ribulose bisphosphate carboxylase large chain">
    <location>
        <begin position="1" status="less than"/>
        <end position="469" status="greater than"/>
    </location>
</feature>
<feature type="active site" description="Proton acceptor" evidence="1">
    <location>
        <position position="168"/>
    </location>
</feature>
<feature type="active site" description="Proton acceptor" evidence="1">
    <location>
        <position position="287"/>
    </location>
</feature>
<feature type="binding site" description="in homodimeric partner" evidence="1">
    <location>
        <position position="116"/>
    </location>
    <ligand>
        <name>substrate</name>
    </ligand>
</feature>
<feature type="binding site" evidence="1">
    <location>
        <position position="166"/>
    </location>
    <ligand>
        <name>substrate</name>
    </ligand>
</feature>
<feature type="binding site" evidence="1">
    <location>
        <position position="170"/>
    </location>
    <ligand>
        <name>substrate</name>
    </ligand>
</feature>
<feature type="binding site" description="via carbamate group" evidence="1">
    <location>
        <position position="194"/>
    </location>
    <ligand>
        <name>Mg(2+)</name>
        <dbReference type="ChEBI" id="CHEBI:18420"/>
    </ligand>
</feature>
<feature type="binding site" evidence="1">
    <location>
        <position position="196"/>
    </location>
    <ligand>
        <name>Mg(2+)</name>
        <dbReference type="ChEBI" id="CHEBI:18420"/>
    </ligand>
</feature>
<feature type="binding site" evidence="1">
    <location>
        <position position="197"/>
    </location>
    <ligand>
        <name>Mg(2+)</name>
        <dbReference type="ChEBI" id="CHEBI:18420"/>
    </ligand>
</feature>
<feature type="binding site" evidence="1">
    <location>
        <position position="288"/>
    </location>
    <ligand>
        <name>substrate</name>
    </ligand>
</feature>
<feature type="binding site" evidence="1">
    <location>
        <position position="320"/>
    </location>
    <ligand>
        <name>substrate</name>
    </ligand>
</feature>
<feature type="binding site" evidence="1">
    <location>
        <position position="372"/>
    </location>
    <ligand>
        <name>substrate</name>
    </ligand>
</feature>
<feature type="site" description="Transition state stabilizer" evidence="1">
    <location>
        <position position="327"/>
    </location>
</feature>
<feature type="modified residue" description="N6,N6,N6-trimethyllysine" evidence="1">
    <location>
        <position position="7"/>
    </location>
</feature>
<feature type="modified residue" description="N6-carboxylysine" evidence="1">
    <location>
        <position position="194"/>
    </location>
</feature>
<feature type="disulfide bond" description="Interchain; in linked form" evidence="1">
    <location>
        <position position="240"/>
    </location>
</feature>
<feature type="non-terminal residue">
    <location>
        <position position="1"/>
    </location>
</feature>
<feature type="non-terminal residue">
    <location>
        <position position="469"/>
    </location>
</feature>
<gene>
    <name evidence="1" type="primary">rbcL</name>
</gene>
<accession>Q9XQJ6</accession>
<reference key="1">
    <citation type="submission" date="1998-09" db="EMBL/GenBank/DDBJ databases">
        <title>Support for an expanded family concept of Malvaceae within a recircumscribed oder Malvales: a combined analysis of plastid atpB and rbcL DNA sequences.</title>
        <authorList>
            <person name="Bayer C."/>
            <person name="Fay M.F."/>
            <person name="de Bruin A.Y."/>
            <person name="Savolainen V."/>
            <person name="Morton C.M."/>
            <person name="Kubitzki K."/>
            <person name="Alverson W.S."/>
            <person name="Chase M.W."/>
        </authorList>
    </citation>
    <scope>NUCLEOTIDE SEQUENCE [GENOMIC DNA]</scope>
    <source>
        <tissue>Leaf</tissue>
    </source>
</reference>
<name>RBL_PACAQ</name>
<proteinExistence type="inferred from homology"/>
<organism>
    <name type="scientific">Pachira aquatica</name>
    <name type="common">Guiana chestnut</name>
    <dbReference type="NCBI Taxonomy" id="69118"/>
    <lineage>
        <taxon>Eukaryota</taxon>
        <taxon>Viridiplantae</taxon>
        <taxon>Streptophyta</taxon>
        <taxon>Embryophyta</taxon>
        <taxon>Tracheophyta</taxon>
        <taxon>Spermatophyta</taxon>
        <taxon>Magnoliopsida</taxon>
        <taxon>eudicotyledons</taxon>
        <taxon>Gunneridae</taxon>
        <taxon>Pentapetalae</taxon>
        <taxon>rosids</taxon>
        <taxon>malvids</taxon>
        <taxon>Malvales</taxon>
        <taxon>Malvaceae</taxon>
        <taxon>Bombacoideae</taxon>
        <taxon>Pachira</taxon>
    </lineage>
</organism>
<comment type="function">
    <text evidence="1">RuBisCO catalyzes two reactions: the carboxylation of D-ribulose 1,5-bisphosphate, the primary event in carbon dioxide fixation, as well as the oxidative fragmentation of the pentose substrate in the photorespiration process. Both reactions occur simultaneously and in competition at the same active site.</text>
</comment>
<comment type="catalytic activity">
    <reaction evidence="1">
        <text>2 (2R)-3-phosphoglycerate + 2 H(+) = D-ribulose 1,5-bisphosphate + CO2 + H2O</text>
        <dbReference type="Rhea" id="RHEA:23124"/>
        <dbReference type="ChEBI" id="CHEBI:15377"/>
        <dbReference type="ChEBI" id="CHEBI:15378"/>
        <dbReference type="ChEBI" id="CHEBI:16526"/>
        <dbReference type="ChEBI" id="CHEBI:57870"/>
        <dbReference type="ChEBI" id="CHEBI:58272"/>
        <dbReference type="EC" id="4.1.1.39"/>
    </reaction>
</comment>
<comment type="catalytic activity">
    <reaction evidence="1">
        <text>D-ribulose 1,5-bisphosphate + O2 = 2-phosphoglycolate + (2R)-3-phosphoglycerate + 2 H(+)</text>
        <dbReference type="Rhea" id="RHEA:36631"/>
        <dbReference type="ChEBI" id="CHEBI:15378"/>
        <dbReference type="ChEBI" id="CHEBI:15379"/>
        <dbReference type="ChEBI" id="CHEBI:57870"/>
        <dbReference type="ChEBI" id="CHEBI:58033"/>
        <dbReference type="ChEBI" id="CHEBI:58272"/>
    </reaction>
</comment>
<comment type="cofactor">
    <cofactor evidence="1">
        <name>Mg(2+)</name>
        <dbReference type="ChEBI" id="CHEBI:18420"/>
    </cofactor>
    <text evidence="1">Binds 1 Mg(2+) ion per subunit.</text>
</comment>
<comment type="subunit">
    <text evidence="1">Heterohexadecamer of 8 large chains and 8 small chains; disulfide-linked. The disulfide link is formed within the large subunit homodimers.</text>
</comment>
<comment type="subcellular location">
    <subcellularLocation>
        <location>Plastid</location>
        <location>Chloroplast</location>
    </subcellularLocation>
</comment>
<comment type="PTM">
    <text evidence="1">The disulfide bond which can form in the large chain dimeric partners within the hexadecamer appears to be associated with oxidative stress and protein turnover.</text>
</comment>
<comment type="miscellaneous">
    <text evidence="1">The basic functional RuBisCO is composed of a large chain homodimer in a 'head-to-tail' conformation. In form I RuBisCO this homodimer is arranged in a barrel-like tetramer with the small subunits forming a tetrameric 'cap' on each end of the 'barrel'.</text>
</comment>
<comment type="similarity">
    <text evidence="1">Belongs to the RuBisCO large chain family. Type I subfamily.</text>
</comment>
<keyword id="KW-0113">Calvin cycle</keyword>
<keyword id="KW-0120">Carbon dioxide fixation</keyword>
<keyword id="KW-0150">Chloroplast</keyword>
<keyword id="KW-1015">Disulfide bond</keyword>
<keyword id="KW-0456">Lyase</keyword>
<keyword id="KW-0460">Magnesium</keyword>
<keyword id="KW-0479">Metal-binding</keyword>
<keyword id="KW-0488">Methylation</keyword>
<keyword id="KW-0503">Monooxygenase</keyword>
<keyword id="KW-0560">Oxidoreductase</keyword>
<keyword id="KW-0601">Photorespiration</keyword>
<keyword id="KW-0602">Photosynthesis</keyword>
<keyword id="KW-0934">Plastid</keyword>
<protein>
    <recommendedName>
        <fullName evidence="1">Ribulose bisphosphate carboxylase large chain</fullName>
        <shortName evidence="1">RuBisCO large subunit</shortName>
        <ecNumber evidence="1">4.1.1.39</ecNumber>
    </recommendedName>
</protein>
<sequence length="469" mass="52073">KASVGFKAGVKEYKLTYYTPEYEVKDTDILAAFRVTPQPGVPPEEAGAAVAAESSTGTWTTVWTDGLTSLDRYKGRCYHIEPVAGEENQYICYVAYPLDLFEEGSVTNMFTSIVGNVFGFKALRALRLEDLRIPTSYTKTFQGPPHGIQVERDKLNKYGRPLLGCTIKPKLGLSAKNYGRAVYECLRGGLDFTKDDENVNSQPFMRWRDRFVFCAEAIYKAQAETGEIKGHYLNATAGTCEEMMKRAIFARELGVPIVMHDYLTGGFTANTSLAHYCRDNGLLLHIHRAMHAVIDRQKNHGMHFRVLAKALRLSGGDHIHAGTVVGKLEGERDITLGFVDLLRDDFIEKDRSRGIYFTQDWVSLPGVLPVASGGIHVWHMPALTEIFGDDSVLQFGGGTLGHPWGNAPGAVANRVALEACVKARNEGRDLAREGNEIIREASKWSPELAAACEVWKEIKFEFQAVDTLD</sequence>
<geneLocation type="chloroplast"/>